<sequence>MGDEKDSWKVKTLDEILQEKKRRKEQEEKAEIKRLKNSDDRDSKRDSLEEGELRDHRMEITIRNSPYRREDSMEDRGEEDDSLAIKPPQQMSRKEKAHHRKDEKRKEKRRHRSHSAEGGKHARVKEKEREHERRKRHREEQDKARREWERQKRREMAREHSRRERDRLEQLERKRERERKLREQQKEQREQKERERRAEERRKEREARREVSAHHRTMREEYSDKGKVGHWSRSPLRPPRERFEMGDNRKPVKEEKVEERDLLSDLQDISDSERKTSSAESSSAESGSGSEEEEEEEEEEEEEEGSTSEESEEEEEEEEEEEEEETGSNSEEASEQSAEEVSDEEMSEDEDRENENHILVVPESRFDRDSGDSEEGEEEVGEGTPQSSAPTEGDYVPDSPALSPIELKQELPKYLPALQGCRSVEEFQCLNRIEEGTYGVVYRAKDKKTDEIVALKRLKMEKEKEGFPITSLREINTILKAQHPNIVTVREIVVGSNMDKIYIVMNYVEHDLKSLMETMKQPFLPGEVKTLMIQLLSGVKHLHDNWILHRDLKTSNLLLSHAGILKVGDFGLAREYGSPLKAYTPVVVTLWYRAPELLLGAKEYSTAVDMWSVGCIFGELLTQKPLFPGKSDIDQINKIFKDLGTPSEKIWPGYNDLPAVKKMTFSEYPYNNLRKRFGALLSDQGFDLMNKFLTYYPGRRINAEDGLKHEYFRETPLPIDPSMFPTWPAKSEQQRVKRGTSPRPPEGGLGYSQLGDDDLKETGFHLTTTNQGASAAGPGFSLKF</sequence>
<proteinExistence type="evidence at protein level"/>
<name>CD11B_MOUSE</name>
<gene>
    <name type="primary">Cdk11b</name>
    <name type="synonym">Cdc2l1</name>
    <name type="synonym">Cdk11</name>
</gene>
<feature type="chain" id="PRO_0000024313" description="Cyclin-dependent kinase 11B">
    <location>
        <begin position="1"/>
        <end position="784"/>
    </location>
</feature>
<feature type="domain" description="Protein kinase" evidence="4">
    <location>
        <begin position="427"/>
        <end position="712"/>
    </location>
</feature>
<feature type="region of interest" description="Disordered" evidence="6">
    <location>
        <begin position="18"/>
        <end position="401"/>
    </location>
</feature>
<feature type="region of interest" description="Disordered" evidence="6">
    <location>
        <begin position="722"/>
        <end position="784"/>
    </location>
</feature>
<feature type="compositionally biased region" description="Basic and acidic residues" evidence="6">
    <location>
        <begin position="18"/>
        <end position="60"/>
    </location>
</feature>
<feature type="compositionally biased region" description="Basic residues" evidence="6">
    <location>
        <begin position="95"/>
        <end position="113"/>
    </location>
</feature>
<feature type="compositionally biased region" description="Basic and acidic residues" evidence="6">
    <location>
        <begin position="114"/>
        <end position="131"/>
    </location>
</feature>
<feature type="compositionally biased region" description="Basic and acidic residues" evidence="6">
    <location>
        <begin position="138"/>
        <end position="227"/>
    </location>
</feature>
<feature type="compositionally biased region" description="Basic and acidic residues" evidence="6">
    <location>
        <begin position="238"/>
        <end position="263"/>
    </location>
</feature>
<feature type="compositionally biased region" description="Low complexity" evidence="6">
    <location>
        <begin position="278"/>
        <end position="289"/>
    </location>
</feature>
<feature type="compositionally biased region" description="Acidic residues" evidence="6">
    <location>
        <begin position="290"/>
        <end position="353"/>
    </location>
</feature>
<feature type="compositionally biased region" description="Acidic residues" evidence="6">
    <location>
        <begin position="372"/>
        <end position="381"/>
    </location>
</feature>
<feature type="active site" description="Proton acceptor" evidence="4 5">
    <location>
        <position position="551"/>
    </location>
</feature>
<feature type="binding site" evidence="4">
    <location>
        <begin position="433"/>
        <end position="441"/>
    </location>
    <ligand>
        <name>ATP</name>
        <dbReference type="ChEBI" id="CHEBI:30616"/>
    </ligand>
</feature>
<feature type="binding site" evidence="4">
    <location>
        <position position="456"/>
    </location>
    <ligand>
        <name>ATP</name>
        <dbReference type="ChEBI" id="CHEBI:30616"/>
    </ligand>
</feature>
<feature type="modified residue" description="Phosphoserine" evidence="9">
    <location>
        <position position="47"/>
    </location>
</feature>
<feature type="modified residue" description="Phosphoserine" evidence="9">
    <location>
        <position position="72"/>
    </location>
</feature>
<feature type="modified residue" description="Phosphoserine" evidence="3">
    <location>
        <position position="115"/>
    </location>
</feature>
<feature type="modified residue" description="Phosphoserine" evidence="9">
    <location>
        <position position="270"/>
    </location>
</feature>
<feature type="modified residue" description="Phosphoserine; by CDK7" evidence="3">
    <location>
        <position position="471"/>
    </location>
</feature>
<feature type="modified residue" description="Phosphothreonine; by CDK7" evidence="3">
    <location>
        <position position="477"/>
    </location>
</feature>
<feature type="modified residue" description="Phosphoserine" evidence="9">
    <location>
        <position position="578"/>
    </location>
</feature>
<feature type="modified residue" description="Phosphotyrosine" evidence="3">
    <location>
        <position position="583"/>
    </location>
</feature>
<feature type="modified residue" description="Phosphothreonine" evidence="9">
    <location>
        <position position="584"/>
    </location>
</feature>
<feature type="modified residue" description="Phosphothreonine" evidence="9">
    <location>
        <position position="740"/>
    </location>
</feature>
<feature type="modified residue" description="Phosphoserine" evidence="9">
    <location>
        <position position="741"/>
    </location>
</feature>
<feature type="cross-link" description="Glycyl lysine isopeptide (Lys-Gly) (interchain with G-Cter in SUMO2)" evidence="3">
    <location>
        <position position="630"/>
    </location>
</feature>
<feature type="splice variant" id="VSP_018835" description="In isoform 2." evidence="7">
    <location>
        <begin position="1"/>
        <end position="345"/>
    </location>
</feature>
<feature type="sequence conflict" description="In Ref. 4; AAH52920." evidence="8" ref="4">
    <original>LKN</original>
    <variation>MSQ</variation>
    <location>
        <begin position="35"/>
        <end position="37"/>
    </location>
</feature>
<feature type="sequence conflict" description="In Ref. 2; AAA66169." evidence="8" ref="2">
    <location>
        <position position="284"/>
    </location>
</feature>
<feature type="sequence conflict" description="In Ref. 1; AAA03518." evidence="8" ref="1">
    <original>S</original>
    <variation>T</variation>
    <location>
        <position position="560"/>
    </location>
</feature>
<feature type="sequence conflict" description="In Ref. 1; AAA03518." evidence="8" ref="1">
    <original>V</original>
    <variation>C</variation>
    <location>
        <position position="608"/>
    </location>
</feature>
<feature type="sequence conflict" description="In Ref. 1; AAA03518." evidence="8" ref="1">
    <original>T</original>
    <variation>S</variation>
    <location>
        <position position="645"/>
    </location>
</feature>
<feature type="sequence conflict" description="In Ref. 1; AAA03518." evidence="8" ref="1">
    <original>Y</original>
    <variation>I</variation>
    <location>
        <position position="668"/>
    </location>
</feature>
<dbReference type="EC" id="2.7.11.22"/>
<dbReference type="EMBL" id="M58633">
    <property type="protein sequence ID" value="AAA03518.1"/>
    <property type="status" value="ALT_FRAME"/>
    <property type="molecule type" value="mRNA"/>
</dbReference>
<dbReference type="EMBL" id="L37092">
    <property type="protein sequence ID" value="AAA66169.1"/>
    <property type="molecule type" value="mRNA"/>
</dbReference>
<dbReference type="EMBL" id="AK077668">
    <property type="protein sequence ID" value="BAC36942.1"/>
    <property type="molecule type" value="mRNA"/>
</dbReference>
<dbReference type="EMBL" id="AK147133">
    <property type="protein sequence ID" value="BAE27703.1"/>
    <property type="molecule type" value="mRNA"/>
</dbReference>
<dbReference type="EMBL" id="BC052920">
    <property type="protein sequence ID" value="AAH52920.1"/>
    <property type="molecule type" value="mRNA"/>
</dbReference>
<dbReference type="CCDS" id="CCDS19033.1">
    <molecule id="P24788-1"/>
</dbReference>
<dbReference type="PIR" id="A55817">
    <property type="entry name" value="A55817"/>
</dbReference>
<dbReference type="RefSeq" id="NP_001334237.1">
    <property type="nucleotide sequence ID" value="NM_001347308.1"/>
</dbReference>
<dbReference type="RefSeq" id="NP_001342498.1">
    <molecule id="P24788-2"/>
    <property type="nucleotide sequence ID" value="NM_001355569.2"/>
</dbReference>
<dbReference type="RefSeq" id="NP_001406923.1">
    <molecule id="P24788-1"/>
    <property type="nucleotide sequence ID" value="NM_001419994.1"/>
</dbReference>
<dbReference type="RefSeq" id="NP_001406929.1">
    <molecule id="P24788-2"/>
    <property type="nucleotide sequence ID" value="NM_001420000.1"/>
</dbReference>
<dbReference type="RefSeq" id="NP_031687.2">
    <molecule id="P24788-1"/>
    <property type="nucleotide sequence ID" value="NM_007661.3"/>
</dbReference>
<dbReference type="RefSeq" id="XP_006538571.1">
    <property type="nucleotide sequence ID" value="XM_006538508.2"/>
</dbReference>
<dbReference type="RefSeq" id="XP_006538574.1">
    <property type="nucleotide sequence ID" value="XM_006538511.2"/>
</dbReference>
<dbReference type="RefSeq" id="XP_011248481.1">
    <property type="nucleotide sequence ID" value="XM_011250179.2"/>
</dbReference>
<dbReference type="RefSeq" id="XP_017175418.1">
    <property type="nucleotide sequence ID" value="XM_017319929.1"/>
</dbReference>
<dbReference type="RefSeq" id="XP_017175419.1">
    <property type="nucleotide sequence ID" value="XM_017319930.1"/>
</dbReference>
<dbReference type="RefSeq" id="XP_017175422.1">
    <property type="nucleotide sequence ID" value="XM_017319933.1"/>
</dbReference>
<dbReference type="RefSeq" id="XP_017175423.1">
    <property type="nucleotide sequence ID" value="XM_017319934.1"/>
</dbReference>
<dbReference type="RefSeq" id="XP_036019509.1">
    <molecule id="P24788-2"/>
    <property type="nucleotide sequence ID" value="XM_036163616.1"/>
</dbReference>
<dbReference type="SMR" id="P24788"/>
<dbReference type="BioGRID" id="198625">
    <property type="interactions" value="10"/>
</dbReference>
<dbReference type="ComplexPortal" id="CPX-350">
    <molecule id="P24788-1"/>
    <property type="entry name" value="Cyclin L2-CDK11B(p110) complex"/>
</dbReference>
<dbReference type="ComplexPortal" id="CPX-351">
    <molecule id="P24788-1"/>
    <property type="entry name" value="Cyclin L1-CDK11B(p110) complex"/>
</dbReference>
<dbReference type="ComplexPortal" id="CPX-352">
    <molecule id="P24788-2"/>
    <property type="entry name" value="Cyclin L1-CDK11B(p58) complex"/>
</dbReference>
<dbReference type="ComplexPortal" id="CPX-353">
    <molecule id="P24788-2"/>
    <property type="entry name" value="Cyclin L2-CDK11B(p58) complex"/>
</dbReference>
<dbReference type="FunCoup" id="P24788">
    <property type="interactions" value="2245"/>
</dbReference>
<dbReference type="IntAct" id="P24788">
    <property type="interactions" value="4"/>
</dbReference>
<dbReference type="MINT" id="P24788"/>
<dbReference type="STRING" id="10090.ENSMUSP00000101225"/>
<dbReference type="iPTMnet" id="P24788"/>
<dbReference type="PhosphoSitePlus" id="P24788"/>
<dbReference type="jPOST" id="P24788"/>
<dbReference type="PaxDb" id="10090-ENSMUSP00000070527"/>
<dbReference type="PeptideAtlas" id="P24788"/>
<dbReference type="ProteomicsDB" id="281432">
    <molecule id="P24788-1"/>
</dbReference>
<dbReference type="ProteomicsDB" id="281433">
    <molecule id="P24788-2"/>
</dbReference>
<dbReference type="Pumba" id="P24788"/>
<dbReference type="DNASU" id="12537"/>
<dbReference type="Ensembl" id="ENSMUST00000067081.10">
    <molecule id="P24788-1"/>
    <property type="protein sequence ID" value="ENSMUSP00000070527.4"/>
    <property type="gene ID" value="ENSMUSG00000029062.15"/>
</dbReference>
<dbReference type="Ensembl" id="ENSMUST00000105600.8">
    <molecule id="P24788-1"/>
    <property type="protein sequence ID" value="ENSMUSP00000101225.2"/>
    <property type="gene ID" value="ENSMUSG00000029062.15"/>
</dbReference>
<dbReference type="GeneID" id="12537"/>
<dbReference type="KEGG" id="mmu:12537"/>
<dbReference type="UCSC" id="uc008wea.1">
    <molecule id="P24788-1"/>
    <property type="organism name" value="mouse"/>
</dbReference>
<dbReference type="AGR" id="MGI:88353"/>
<dbReference type="CTD" id="984"/>
<dbReference type="MGI" id="MGI:88353">
    <property type="gene designation" value="Cdk11b"/>
</dbReference>
<dbReference type="VEuPathDB" id="HostDB:ENSMUSG00000029062"/>
<dbReference type="eggNOG" id="KOG0663">
    <property type="taxonomic scope" value="Eukaryota"/>
</dbReference>
<dbReference type="GeneTree" id="ENSGT00940000158459"/>
<dbReference type="HOGENOM" id="CLU_000288_91_3_1"/>
<dbReference type="InParanoid" id="P24788"/>
<dbReference type="OMA" id="YYNVMLG"/>
<dbReference type="OrthoDB" id="647at2759"/>
<dbReference type="PhylomeDB" id="P24788"/>
<dbReference type="TreeFam" id="TF101035"/>
<dbReference type="BRENDA" id="2.7.11.22">
    <property type="organism ID" value="3474"/>
</dbReference>
<dbReference type="Reactome" id="R-MMU-380270">
    <property type="pathway name" value="Recruitment of mitotic centrosome proteins and complexes"/>
</dbReference>
<dbReference type="BioGRID-ORCS" id="12537">
    <property type="hits" value="15 hits in 80 CRISPR screens"/>
</dbReference>
<dbReference type="ChiTaRS" id="Cdk11b">
    <property type="organism name" value="mouse"/>
</dbReference>
<dbReference type="PRO" id="PR:P24788"/>
<dbReference type="Proteomes" id="UP000000589">
    <property type="component" value="Chromosome 4"/>
</dbReference>
<dbReference type="RNAct" id="P24788">
    <property type="molecule type" value="protein"/>
</dbReference>
<dbReference type="Bgee" id="ENSMUSG00000029062">
    <property type="expression patterns" value="Expressed in granulocyte and 278 other cell types or tissues"/>
</dbReference>
<dbReference type="ExpressionAtlas" id="P24788">
    <property type="expression patterns" value="baseline and differential"/>
</dbReference>
<dbReference type="GO" id="GO:0000307">
    <property type="term" value="C:cyclin-dependent protein kinase holoenzyme complex"/>
    <property type="evidence" value="ECO:0000250"/>
    <property type="project" value="ComplexPortal"/>
</dbReference>
<dbReference type="GO" id="GO:0005654">
    <property type="term" value="C:nucleoplasm"/>
    <property type="evidence" value="ECO:0000304"/>
    <property type="project" value="Reactome"/>
</dbReference>
<dbReference type="GO" id="GO:0005634">
    <property type="term" value="C:nucleus"/>
    <property type="evidence" value="ECO:0000314"/>
    <property type="project" value="MGI"/>
</dbReference>
<dbReference type="GO" id="GO:0005524">
    <property type="term" value="F:ATP binding"/>
    <property type="evidence" value="ECO:0007669"/>
    <property type="project" value="UniProtKB-KW"/>
</dbReference>
<dbReference type="GO" id="GO:0004693">
    <property type="term" value="F:cyclin-dependent protein serine/threonine kinase activity"/>
    <property type="evidence" value="ECO:0007669"/>
    <property type="project" value="UniProtKB-EC"/>
</dbReference>
<dbReference type="GO" id="GO:0106310">
    <property type="term" value="F:protein serine kinase activity"/>
    <property type="evidence" value="ECO:0007669"/>
    <property type="project" value="RHEA"/>
</dbReference>
<dbReference type="GO" id="GO:0001824">
    <property type="term" value="P:blastocyst development"/>
    <property type="evidence" value="ECO:0000315"/>
    <property type="project" value="MGI"/>
</dbReference>
<dbReference type="GO" id="GO:0071962">
    <property type="term" value="P:mitotic sister chromatid cohesion, centromeric"/>
    <property type="evidence" value="ECO:0000266"/>
    <property type="project" value="MGI"/>
</dbReference>
<dbReference type="GO" id="GO:2001234">
    <property type="term" value="P:negative regulation of apoptotic signaling pathway"/>
    <property type="evidence" value="ECO:0000315"/>
    <property type="project" value="MGI"/>
</dbReference>
<dbReference type="GO" id="GO:0042981">
    <property type="term" value="P:regulation of apoptotic process"/>
    <property type="evidence" value="ECO:0000303"/>
    <property type="project" value="ComplexPortal"/>
</dbReference>
<dbReference type="GO" id="GO:0051726">
    <property type="term" value="P:regulation of cell cycle"/>
    <property type="evidence" value="ECO:0000303"/>
    <property type="project" value="ComplexPortal"/>
</dbReference>
<dbReference type="GO" id="GO:0046605">
    <property type="term" value="P:regulation of centrosome cycle"/>
    <property type="evidence" value="ECO:0000303"/>
    <property type="project" value="ComplexPortal"/>
</dbReference>
<dbReference type="GO" id="GO:0007088">
    <property type="term" value="P:regulation of mitotic nuclear division"/>
    <property type="evidence" value="ECO:0000315"/>
    <property type="project" value="MGI"/>
</dbReference>
<dbReference type="GO" id="GO:0043484">
    <property type="term" value="P:regulation of RNA splicing"/>
    <property type="evidence" value="ECO:0000250"/>
    <property type="project" value="ComplexPortal"/>
</dbReference>
<dbReference type="CDD" id="cd07843">
    <property type="entry name" value="STKc_CDC2L1"/>
    <property type="match status" value="1"/>
</dbReference>
<dbReference type="FunFam" id="3.30.200.20:FF:000054">
    <property type="entry name" value="Cyclin-dependent kinase 11B"/>
    <property type="match status" value="1"/>
</dbReference>
<dbReference type="FunFam" id="1.10.510.10:FF:000124">
    <property type="entry name" value="cyclin-dependent kinase 11B isoform X1"/>
    <property type="match status" value="1"/>
</dbReference>
<dbReference type="Gene3D" id="3.30.200.20">
    <property type="entry name" value="Phosphorylase Kinase, domain 1"/>
    <property type="match status" value="1"/>
</dbReference>
<dbReference type="Gene3D" id="1.10.510.10">
    <property type="entry name" value="Transferase(Phosphotransferase) domain 1"/>
    <property type="match status" value="1"/>
</dbReference>
<dbReference type="InterPro" id="IPR050108">
    <property type="entry name" value="CDK"/>
</dbReference>
<dbReference type="InterPro" id="IPR045267">
    <property type="entry name" value="CDK11/PITSLRE_STKc"/>
</dbReference>
<dbReference type="InterPro" id="IPR011009">
    <property type="entry name" value="Kinase-like_dom_sf"/>
</dbReference>
<dbReference type="InterPro" id="IPR000719">
    <property type="entry name" value="Prot_kinase_dom"/>
</dbReference>
<dbReference type="InterPro" id="IPR008271">
    <property type="entry name" value="Ser/Thr_kinase_AS"/>
</dbReference>
<dbReference type="PANTHER" id="PTHR24056">
    <property type="entry name" value="CELL DIVISION PROTEIN KINASE"/>
    <property type="match status" value="1"/>
</dbReference>
<dbReference type="PANTHER" id="PTHR24056:SF107">
    <property type="entry name" value="CYCLIN-DEPENDENT KINASE 11A-RELATED"/>
    <property type="match status" value="1"/>
</dbReference>
<dbReference type="Pfam" id="PF00069">
    <property type="entry name" value="Pkinase"/>
    <property type="match status" value="1"/>
</dbReference>
<dbReference type="SMART" id="SM00220">
    <property type="entry name" value="S_TKc"/>
    <property type="match status" value="1"/>
</dbReference>
<dbReference type="SUPFAM" id="SSF56112">
    <property type="entry name" value="Protein kinase-like (PK-like)"/>
    <property type="match status" value="1"/>
</dbReference>
<dbReference type="PROSITE" id="PS50011">
    <property type="entry name" value="PROTEIN_KINASE_DOM"/>
    <property type="match status" value="1"/>
</dbReference>
<dbReference type="PROSITE" id="PS00108">
    <property type="entry name" value="PROTEIN_KINASE_ST"/>
    <property type="match status" value="1"/>
</dbReference>
<accession>P24788</accession>
<accession>Q3UI03</accession>
<accession>Q61399</accession>
<accession>Q7TST4</accession>
<accession>Q8BP53</accession>
<evidence type="ECO:0000250" key="1"/>
<evidence type="ECO:0000250" key="2">
    <source>
        <dbReference type="UniProtKB" id="P06493"/>
    </source>
</evidence>
<evidence type="ECO:0000250" key="3">
    <source>
        <dbReference type="UniProtKB" id="P21127"/>
    </source>
</evidence>
<evidence type="ECO:0000255" key="4">
    <source>
        <dbReference type="PROSITE-ProRule" id="PRU00159"/>
    </source>
</evidence>
<evidence type="ECO:0000255" key="5">
    <source>
        <dbReference type="PROSITE-ProRule" id="PRU10027"/>
    </source>
</evidence>
<evidence type="ECO:0000256" key="6">
    <source>
        <dbReference type="SAM" id="MobiDB-lite"/>
    </source>
</evidence>
<evidence type="ECO:0000303" key="7">
    <source>
    </source>
</evidence>
<evidence type="ECO:0000305" key="8"/>
<evidence type="ECO:0007744" key="9">
    <source>
    </source>
</evidence>
<keyword id="KW-0024">Alternative initiation</keyword>
<keyword id="KW-0067">ATP-binding</keyword>
<keyword id="KW-0131">Cell cycle</keyword>
<keyword id="KW-1017">Isopeptide bond</keyword>
<keyword id="KW-0418">Kinase</keyword>
<keyword id="KW-0547">Nucleotide-binding</keyword>
<keyword id="KW-0597">Phosphoprotein</keyword>
<keyword id="KW-1185">Reference proteome</keyword>
<keyword id="KW-0723">Serine/threonine-protein kinase</keyword>
<keyword id="KW-0808">Transferase</keyword>
<keyword id="KW-0832">Ubl conjugation</keyword>
<reference key="1">
    <citation type="journal article" date="1991" name="Cell Growth Differ.">
        <title>Regulated expression of a cell division control-related protein kinase during development.</title>
        <authorList>
            <person name="Kidd V.J."/>
            <person name="Luo W."/>
            <person name="Xiang J.L."/>
            <person name="Tu F."/>
            <person name="Easton J."/>
            <person name="McCune S."/>
            <person name="Snead M.L."/>
        </authorList>
    </citation>
    <scope>NUCLEOTIDE SEQUENCE [MRNA] (ISOFORM 2)</scope>
</reference>
<reference key="2">
    <citation type="journal article" date="1994" name="J. Biol. Chem.">
        <title>A cyclin-dependent kinase homologue, p130PITSLRE is a phosphotyrosine-independent SH2 ligand.</title>
        <authorList>
            <person name="Malek S.N."/>
            <person name="Desiderio S."/>
        </authorList>
    </citation>
    <scope>NUCLEOTIDE SEQUENCE [MRNA] (ISOFORM 1)</scope>
</reference>
<reference key="3">
    <citation type="journal article" date="2005" name="Science">
        <title>The transcriptional landscape of the mammalian genome.</title>
        <authorList>
            <person name="Carninci P."/>
            <person name="Kasukawa T."/>
            <person name="Katayama S."/>
            <person name="Gough J."/>
            <person name="Frith M.C."/>
            <person name="Maeda N."/>
            <person name="Oyama R."/>
            <person name="Ravasi T."/>
            <person name="Lenhard B."/>
            <person name="Wells C."/>
            <person name="Kodzius R."/>
            <person name="Shimokawa K."/>
            <person name="Bajic V.B."/>
            <person name="Brenner S.E."/>
            <person name="Batalov S."/>
            <person name="Forrest A.R."/>
            <person name="Zavolan M."/>
            <person name="Davis M.J."/>
            <person name="Wilming L.G."/>
            <person name="Aidinis V."/>
            <person name="Allen J.E."/>
            <person name="Ambesi-Impiombato A."/>
            <person name="Apweiler R."/>
            <person name="Aturaliya R.N."/>
            <person name="Bailey T.L."/>
            <person name="Bansal M."/>
            <person name="Baxter L."/>
            <person name="Beisel K.W."/>
            <person name="Bersano T."/>
            <person name="Bono H."/>
            <person name="Chalk A.M."/>
            <person name="Chiu K.P."/>
            <person name="Choudhary V."/>
            <person name="Christoffels A."/>
            <person name="Clutterbuck D.R."/>
            <person name="Crowe M.L."/>
            <person name="Dalla E."/>
            <person name="Dalrymple B.P."/>
            <person name="de Bono B."/>
            <person name="Della Gatta G."/>
            <person name="di Bernardo D."/>
            <person name="Down T."/>
            <person name="Engstrom P."/>
            <person name="Fagiolini M."/>
            <person name="Faulkner G."/>
            <person name="Fletcher C.F."/>
            <person name="Fukushima T."/>
            <person name="Furuno M."/>
            <person name="Futaki S."/>
            <person name="Gariboldi M."/>
            <person name="Georgii-Hemming P."/>
            <person name="Gingeras T.R."/>
            <person name="Gojobori T."/>
            <person name="Green R.E."/>
            <person name="Gustincich S."/>
            <person name="Harbers M."/>
            <person name="Hayashi Y."/>
            <person name="Hensch T.K."/>
            <person name="Hirokawa N."/>
            <person name="Hill D."/>
            <person name="Huminiecki L."/>
            <person name="Iacono M."/>
            <person name="Ikeo K."/>
            <person name="Iwama A."/>
            <person name="Ishikawa T."/>
            <person name="Jakt M."/>
            <person name="Kanapin A."/>
            <person name="Katoh M."/>
            <person name="Kawasawa Y."/>
            <person name="Kelso J."/>
            <person name="Kitamura H."/>
            <person name="Kitano H."/>
            <person name="Kollias G."/>
            <person name="Krishnan S.P."/>
            <person name="Kruger A."/>
            <person name="Kummerfeld S.K."/>
            <person name="Kurochkin I.V."/>
            <person name="Lareau L.F."/>
            <person name="Lazarevic D."/>
            <person name="Lipovich L."/>
            <person name="Liu J."/>
            <person name="Liuni S."/>
            <person name="McWilliam S."/>
            <person name="Madan Babu M."/>
            <person name="Madera M."/>
            <person name="Marchionni L."/>
            <person name="Matsuda H."/>
            <person name="Matsuzawa S."/>
            <person name="Miki H."/>
            <person name="Mignone F."/>
            <person name="Miyake S."/>
            <person name="Morris K."/>
            <person name="Mottagui-Tabar S."/>
            <person name="Mulder N."/>
            <person name="Nakano N."/>
            <person name="Nakauchi H."/>
            <person name="Ng P."/>
            <person name="Nilsson R."/>
            <person name="Nishiguchi S."/>
            <person name="Nishikawa S."/>
            <person name="Nori F."/>
            <person name="Ohara O."/>
            <person name="Okazaki Y."/>
            <person name="Orlando V."/>
            <person name="Pang K.C."/>
            <person name="Pavan W.J."/>
            <person name="Pavesi G."/>
            <person name="Pesole G."/>
            <person name="Petrovsky N."/>
            <person name="Piazza S."/>
            <person name="Reed J."/>
            <person name="Reid J.F."/>
            <person name="Ring B.Z."/>
            <person name="Ringwald M."/>
            <person name="Rost B."/>
            <person name="Ruan Y."/>
            <person name="Salzberg S.L."/>
            <person name="Sandelin A."/>
            <person name="Schneider C."/>
            <person name="Schoenbach C."/>
            <person name="Sekiguchi K."/>
            <person name="Semple C.A."/>
            <person name="Seno S."/>
            <person name="Sessa L."/>
            <person name="Sheng Y."/>
            <person name="Shibata Y."/>
            <person name="Shimada H."/>
            <person name="Shimada K."/>
            <person name="Silva D."/>
            <person name="Sinclair B."/>
            <person name="Sperling S."/>
            <person name="Stupka E."/>
            <person name="Sugiura K."/>
            <person name="Sultana R."/>
            <person name="Takenaka Y."/>
            <person name="Taki K."/>
            <person name="Tammoja K."/>
            <person name="Tan S.L."/>
            <person name="Tang S."/>
            <person name="Taylor M.S."/>
            <person name="Tegner J."/>
            <person name="Teichmann S.A."/>
            <person name="Ueda H.R."/>
            <person name="van Nimwegen E."/>
            <person name="Verardo R."/>
            <person name="Wei C.L."/>
            <person name="Yagi K."/>
            <person name="Yamanishi H."/>
            <person name="Zabarovsky E."/>
            <person name="Zhu S."/>
            <person name="Zimmer A."/>
            <person name="Hide W."/>
            <person name="Bult C."/>
            <person name="Grimmond S.M."/>
            <person name="Teasdale R.D."/>
            <person name="Liu E.T."/>
            <person name="Brusic V."/>
            <person name="Quackenbush J."/>
            <person name="Wahlestedt C."/>
            <person name="Mattick J.S."/>
            <person name="Hume D.A."/>
            <person name="Kai C."/>
            <person name="Sasaki D."/>
            <person name="Tomaru Y."/>
            <person name="Fukuda S."/>
            <person name="Kanamori-Katayama M."/>
            <person name="Suzuki M."/>
            <person name="Aoki J."/>
            <person name="Arakawa T."/>
            <person name="Iida J."/>
            <person name="Imamura K."/>
            <person name="Itoh M."/>
            <person name="Kato T."/>
            <person name="Kawaji H."/>
            <person name="Kawagashira N."/>
            <person name="Kawashima T."/>
            <person name="Kojima M."/>
            <person name="Kondo S."/>
            <person name="Konno H."/>
            <person name="Nakano K."/>
            <person name="Ninomiya N."/>
            <person name="Nishio T."/>
            <person name="Okada M."/>
            <person name="Plessy C."/>
            <person name="Shibata K."/>
            <person name="Shiraki T."/>
            <person name="Suzuki S."/>
            <person name="Tagami M."/>
            <person name="Waki K."/>
            <person name="Watahiki A."/>
            <person name="Okamura-Oho Y."/>
            <person name="Suzuki H."/>
            <person name="Kawai J."/>
            <person name="Hayashizaki Y."/>
        </authorList>
    </citation>
    <scope>NUCLEOTIDE SEQUENCE [LARGE SCALE MRNA] (ISOFORM 1)</scope>
    <source>
        <strain>C57BL/6J</strain>
        <tissue>Stomach</tissue>
    </source>
</reference>
<reference key="4">
    <citation type="journal article" date="2004" name="Genome Res.">
        <title>The status, quality, and expansion of the NIH full-length cDNA project: the Mammalian Gene Collection (MGC).</title>
        <authorList>
            <consortium name="The MGC Project Team"/>
        </authorList>
    </citation>
    <scope>NUCLEOTIDE SEQUENCE [LARGE SCALE MRNA] OF 35-784 (ISOFORM 1)</scope>
    <source>
        <tissue>Eye</tissue>
    </source>
</reference>
<reference key="5">
    <citation type="journal article" date="2004" name="Mol. Cell. Proteomics">
        <title>Phosphoproteomic analysis of the developing mouse brain.</title>
        <authorList>
            <person name="Ballif B.A."/>
            <person name="Villen J."/>
            <person name="Beausoleil S.A."/>
            <person name="Schwartz D."/>
            <person name="Gygi S.P."/>
        </authorList>
    </citation>
    <scope>IDENTIFICATION BY MASS SPECTROMETRY [LARGE SCALE ANALYSIS]</scope>
    <source>
        <tissue>Embryonic brain</tissue>
    </source>
</reference>
<reference key="6">
    <citation type="journal article" date="2007" name="Proc. Natl. Acad. Sci. U.S.A.">
        <title>Large-scale phosphorylation analysis of mouse liver.</title>
        <authorList>
            <person name="Villen J."/>
            <person name="Beausoleil S.A."/>
            <person name="Gerber S.A."/>
            <person name="Gygi S.P."/>
        </authorList>
    </citation>
    <scope>IDENTIFICATION BY MASS SPECTROMETRY [LARGE SCALE ANALYSIS]</scope>
    <source>
        <tissue>Liver</tissue>
    </source>
</reference>
<reference key="7">
    <citation type="journal article" date="2010" name="Cell">
        <title>A tissue-specific atlas of mouse protein phosphorylation and expression.</title>
        <authorList>
            <person name="Huttlin E.L."/>
            <person name="Jedrychowski M.P."/>
            <person name="Elias J.E."/>
            <person name="Goswami T."/>
            <person name="Rad R."/>
            <person name="Beausoleil S.A."/>
            <person name="Villen J."/>
            <person name="Haas W."/>
            <person name="Sowa M.E."/>
            <person name="Gygi S.P."/>
        </authorList>
    </citation>
    <scope>PHOSPHORYLATION [LARGE SCALE ANALYSIS] AT SER-47; SER-72; SER-270; SER-578; THR-584; THR-740 AND SER-741</scope>
    <scope>IDENTIFICATION BY MASS SPECTROMETRY [LARGE SCALE ANALYSIS]</scope>
    <source>
        <tissue>Brain</tissue>
        <tissue>Brown adipose tissue</tissue>
        <tissue>Heart</tissue>
        <tissue>Kidney</tissue>
        <tissue>Liver</tissue>
        <tissue>Lung</tissue>
        <tissue>Pancreas</tissue>
        <tissue>Spleen</tissue>
        <tissue>Testis</tissue>
    </source>
</reference>
<protein>
    <recommendedName>
        <fullName>Cyclin-dependent kinase 11B</fullName>
    </recommendedName>
    <alternativeName>
        <fullName>Cell division cycle 2-like protein kinase 1</fullName>
    </alternativeName>
    <alternativeName>
        <fullName>Cell division protein kinase 11</fullName>
    </alternativeName>
    <alternativeName>
        <fullName>Cyclin-dependent kinase 11</fullName>
        <ecNumber>2.7.11.22</ecNumber>
    </alternativeName>
    <alternativeName>
        <fullName>Galactosyltransferase-associated protein kinase p58/GTA</fullName>
    </alternativeName>
    <alternativeName>
        <fullName>PITSLRE serine/threonine-protein kinase CDC2L1</fullName>
    </alternativeName>
</protein>
<organism>
    <name type="scientific">Mus musculus</name>
    <name type="common">Mouse</name>
    <dbReference type="NCBI Taxonomy" id="10090"/>
    <lineage>
        <taxon>Eukaryota</taxon>
        <taxon>Metazoa</taxon>
        <taxon>Chordata</taxon>
        <taxon>Craniata</taxon>
        <taxon>Vertebrata</taxon>
        <taxon>Euteleostomi</taxon>
        <taxon>Mammalia</taxon>
        <taxon>Eutheria</taxon>
        <taxon>Euarchontoglires</taxon>
        <taxon>Glires</taxon>
        <taxon>Rodentia</taxon>
        <taxon>Myomorpha</taxon>
        <taxon>Muroidea</taxon>
        <taxon>Muridae</taxon>
        <taxon>Murinae</taxon>
        <taxon>Mus</taxon>
        <taxon>Mus</taxon>
    </lineage>
</organism>
<comment type="function">
    <text evidence="3">Plays multiple roles in cell cycle progression, cytokinesis and apoptosis. Involved in pre-mRNA splicing in a kinase activity-dependent manner. May act as a negative regulator of normal cell cycle progression.</text>
</comment>
<comment type="catalytic activity">
    <reaction>
        <text>L-seryl-[protein] + ATP = O-phospho-L-seryl-[protein] + ADP + H(+)</text>
        <dbReference type="Rhea" id="RHEA:17989"/>
        <dbReference type="Rhea" id="RHEA-COMP:9863"/>
        <dbReference type="Rhea" id="RHEA-COMP:11604"/>
        <dbReference type="ChEBI" id="CHEBI:15378"/>
        <dbReference type="ChEBI" id="CHEBI:29999"/>
        <dbReference type="ChEBI" id="CHEBI:30616"/>
        <dbReference type="ChEBI" id="CHEBI:83421"/>
        <dbReference type="ChEBI" id="CHEBI:456216"/>
        <dbReference type="EC" id="2.7.11.22"/>
    </reaction>
</comment>
<comment type="catalytic activity">
    <reaction>
        <text>L-threonyl-[protein] + ATP = O-phospho-L-threonyl-[protein] + ADP + H(+)</text>
        <dbReference type="Rhea" id="RHEA:46608"/>
        <dbReference type="Rhea" id="RHEA-COMP:11060"/>
        <dbReference type="Rhea" id="RHEA-COMP:11605"/>
        <dbReference type="ChEBI" id="CHEBI:15378"/>
        <dbReference type="ChEBI" id="CHEBI:30013"/>
        <dbReference type="ChEBI" id="CHEBI:30616"/>
        <dbReference type="ChEBI" id="CHEBI:61977"/>
        <dbReference type="ChEBI" id="CHEBI:456216"/>
        <dbReference type="EC" id="2.7.11.22"/>
    </reaction>
</comment>
<comment type="cofactor">
    <cofactor>
        <name>Mg(2+)</name>
        <dbReference type="ChEBI" id="CHEBI:18420"/>
    </cofactor>
</comment>
<comment type="activity regulation">
    <text evidence="2">Phosphorylation at Thr-437 or Tyr-438 inactivates the enzyme, while phosphorylation at Thr-584 activates it.</text>
</comment>
<comment type="subunit">
    <text evidence="3">May interact PAK1 and RANBP9. p110C interacts with RNPS1. Interacts with CCND3. Interacts with CCNL1 and CCNL2. Forms complexes with pre-mRNA-splicing factors, including at least SRSF1, SRSF2 AND SRSF7/SLU7.</text>
</comment>
<comment type="alternative products">
    <event type="alternative initiation"/>
    <isoform>
        <id>P24788-1</id>
        <name>1</name>
        <name>p130PITSLRE</name>
        <sequence type="displayed"/>
    </isoform>
    <isoform>
        <id>P24788-2</id>
        <name>2</name>
        <name>p58clk-1</name>
        <sequence type="described" ref="VSP_018835"/>
    </isoform>
</comment>
<comment type="PTM">
    <text evidence="1">Phosphorylation at Ser-115 creates a binding site for 14-3-3 proteins.</text>
</comment>
<comment type="similarity">
    <text evidence="8">Belongs to the protein kinase superfamily. CMGC Ser/Thr protein kinase family. CDC2/CDKX subfamily.</text>
</comment>
<comment type="sequence caution" evidence="8">
    <conflict type="frameshift">
        <sequence resource="EMBL-CDS" id="AAA03518"/>
    </conflict>
</comment>